<protein>
    <recommendedName>
        <fullName evidence="1">Pyridoxal 5'-phosphate synthase subunit PdxT</fullName>
        <ecNumber evidence="1">4.3.3.6</ecNumber>
    </recommendedName>
    <alternativeName>
        <fullName evidence="1">Pdx2</fullName>
    </alternativeName>
    <alternativeName>
        <fullName evidence="1">Pyridoxal 5'-phosphate synthase glutaminase subunit</fullName>
        <ecNumber evidence="1">3.5.1.2</ecNumber>
    </alternativeName>
</protein>
<name>PDXT_HALSA</name>
<comment type="function">
    <text evidence="1">Catalyzes the hydrolysis of glutamine to glutamate and ammonia as part of the biosynthesis of pyridoxal 5'-phosphate. The resulting ammonia molecule is channeled to the active site of PdxS.</text>
</comment>
<comment type="catalytic activity">
    <reaction evidence="1">
        <text>aldehydo-D-ribose 5-phosphate + D-glyceraldehyde 3-phosphate + L-glutamine = pyridoxal 5'-phosphate + L-glutamate + phosphate + 3 H2O + H(+)</text>
        <dbReference type="Rhea" id="RHEA:31507"/>
        <dbReference type="ChEBI" id="CHEBI:15377"/>
        <dbReference type="ChEBI" id="CHEBI:15378"/>
        <dbReference type="ChEBI" id="CHEBI:29985"/>
        <dbReference type="ChEBI" id="CHEBI:43474"/>
        <dbReference type="ChEBI" id="CHEBI:58273"/>
        <dbReference type="ChEBI" id="CHEBI:58359"/>
        <dbReference type="ChEBI" id="CHEBI:59776"/>
        <dbReference type="ChEBI" id="CHEBI:597326"/>
        <dbReference type="EC" id="4.3.3.6"/>
    </reaction>
</comment>
<comment type="catalytic activity">
    <reaction evidence="1">
        <text>L-glutamine + H2O = L-glutamate + NH4(+)</text>
        <dbReference type="Rhea" id="RHEA:15889"/>
        <dbReference type="ChEBI" id="CHEBI:15377"/>
        <dbReference type="ChEBI" id="CHEBI:28938"/>
        <dbReference type="ChEBI" id="CHEBI:29985"/>
        <dbReference type="ChEBI" id="CHEBI:58359"/>
        <dbReference type="EC" id="3.5.1.2"/>
    </reaction>
</comment>
<comment type="pathway">
    <text evidence="1">Cofactor biosynthesis; pyridoxal 5'-phosphate biosynthesis.</text>
</comment>
<comment type="subunit">
    <text evidence="1">In the presence of PdxS, forms a dodecamer of heterodimers. Only shows activity in the heterodimer.</text>
</comment>
<comment type="similarity">
    <text evidence="1">Belongs to the glutaminase PdxT/SNO family.</text>
</comment>
<evidence type="ECO:0000255" key="1">
    <source>
        <dbReference type="HAMAP-Rule" id="MF_01615"/>
    </source>
</evidence>
<sequence>MTLTAGVVAVQGDVSEHAAAIRRAADAHGQPADVREIRTAGVVPECDVLLLPGGESTAISRLLDREGIDAEIRSHVAAGKPLLATCAGLIVSSTDANDDRVETLDVLDVTVDRNAFGRQVDSFEAPLDVDGLADPFPAVFIRAPVIDEVGADATVLASWDGRPVAIRDGPVVATSFHPELTADVRLHELAFFDRTPSAQAGDA</sequence>
<feature type="chain" id="PRO_0000135678" description="Pyridoxal 5'-phosphate synthase subunit PdxT">
    <location>
        <begin position="1"/>
        <end position="203"/>
    </location>
</feature>
<feature type="active site" description="Nucleophile" evidence="1">
    <location>
        <position position="86"/>
    </location>
</feature>
<feature type="active site" description="Charge relay system" evidence="1">
    <location>
        <position position="177"/>
    </location>
</feature>
<feature type="active site" description="Charge relay system" evidence="1">
    <location>
        <position position="179"/>
    </location>
</feature>
<feature type="binding site" evidence="1">
    <location>
        <begin position="54"/>
        <end position="56"/>
    </location>
    <ligand>
        <name>L-glutamine</name>
        <dbReference type="ChEBI" id="CHEBI:58359"/>
    </ligand>
</feature>
<feature type="binding site" evidence="1">
    <location>
        <position position="113"/>
    </location>
    <ligand>
        <name>L-glutamine</name>
        <dbReference type="ChEBI" id="CHEBI:58359"/>
    </ligand>
</feature>
<feature type="binding site" evidence="1">
    <location>
        <begin position="141"/>
        <end position="142"/>
    </location>
    <ligand>
        <name>L-glutamine</name>
        <dbReference type="ChEBI" id="CHEBI:58359"/>
    </ligand>
</feature>
<organism>
    <name type="scientific">Halobacterium salinarum (strain ATCC 700922 / JCM 11081 / NRC-1)</name>
    <name type="common">Halobacterium halobium</name>
    <dbReference type="NCBI Taxonomy" id="64091"/>
    <lineage>
        <taxon>Archaea</taxon>
        <taxon>Methanobacteriati</taxon>
        <taxon>Methanobacteriota</taxon>
        <taxon>Stenosarchaea group</taxon>
        <taxon>Halobacteria</taxon>
        <taxon>Halobacteriales</taxon>
        <taxon>Halobacteriaceae</taxon>
        <taxon>Halobacterium</taxon>
        <taxon>Halobacterium salinarum NRC-34001</taxon>
    </lineage>
</organism>
<proteinExistence type="inferred from homology"/>
<gene>
    <name evidence="1" type="primary">pdxT</name>
    <name type="ordered locus">VNG_2598G</name>
</gene>
<accession>Q9HMD2</accession>
<dbReference type="EC" id="4.3.3.6" evidence="1"/>
<dbReference type="EC" id="3.5.1.2" evidence="1"/>
<dbReference type="EMBL" id="AE004437">
    <property type="protein sequence ID" value="AAG20639.1"/>
    <property type="molecule type" value="Genomic_DNA"/>
</dbReference>
<dbReference type="PIR" id="C84409">
    <property type="entry name" value="C84409"/>
</dbReference>
<dbReference type="RefSeq" id="WP_010903941.1">
    <property type="nucleotide sequence ID" value="NC_002607.1"/>
</dbReference>
<dbReference type="SMR" id="Q9HMD2"/>
<dbReference type="FunCoup" id="Q9HMD2">
    <property type="interactions" value="96"/>
</dbReference>
<dbReference type="STRING" id="64091.VNG_2598G"/>
<dbReference type="MEROPS" id="C26.A32"/>
<dbReference type="PaxDb" id="64091-VNG_2598G"/>
<dbReference type="GeneID" id="89348582"/>
<dbReference type="KEGG" id="hal:VNG_2598G"/>
<dbReference type="PATRIC" id="fig|64091.14.peg.2012"/>
<dbReference type="HOGENOM" id="CLU_069674_2_0_2"/>
<dbReference type="InParanoid" id="Q9HMD2"/>
<dbReference type="OrthoDB" id="26717at2157"/>
<dbReference type="PhylomeDB" id="Q9HMD2"/>
<dbReference type="UniPathway" id="UPA00245"/>
<dbReference type="Proteomes" id="UP000000554">
    <property type="component" value="Chromosome"/>
</dbReference>
<dbReference type="GO" id="GO:0005829">
    <property type="term" value="C:cytosol"/>
    <property type="evidence" value="ECO:0000318"/>
    <property type="project" value="GO_Central"/>
</dbReference>
<dbReference type="GO" id="GO:1903600">
    <property type="term" value="C:glutaminase complex"/>
    <property type="evidence" value="ECO:0000318"/>
    <property type="project" value="GO_Central"/>
</dbReference>
<dbReference type="GO" id="GO:0004359">
    <property type="term" value="F:glutaminase activity"/>
    <property type="evidence" value="ECO:0007669"/>
    <property type="project" value="UniProtKB-UniRule"/>
</dbReference>
<dbReference type="GO" id="GO:0036381">
    <property type="term" value="F:pyridoxal 5'-phosphate synthase (glutamine hydrolysing) activity"/>
    <property type="evidence" value="ECO:0007669"/>
    <property type="project" value="UniProtKB-UniRule"/>
</dbReference>
<dbReference type="GO" id="GO:0006543">
    <property type="term" value="P:glutamine catabolic process"/>
    <property type="evidence" value="ECO:0007669"/>
    <property type="project" value="UniProtKB-UniRule"/>
</dbReference>
<dbReference type="GO" id="GO:0042823">
    <property type="term" value="P:pyridoxal phosphate biosynthetic process"/>
    <property type="evidence" value="ECO:0000318"/>
    <property type="project" value="GO_Central"/>
</dbReference>
<dbReference type="GO" id="GO:0008614">
    <property type="term" value="P:pyridoxine metabolic process"/>
    <property type="evidence" value="ECO:0000318"/>
    <property type="project" value="GO_Central"/>
</dbReference>
<dbReference type="CDD" id="cd01749">
    <property type="entry name" value="GATase1_PB"/>
    <property type="match status" value="1"/>
</dbReference>
<dbReference type="FunFam" id="3.40.50.880:FF:000010">
    <property type="entry name" value="uncharacterized protein LOC100176842 isoform X2"/>
    <property type="match status" value="1"/>
</dbReference>
<dbReference type="Gene3D" id="3.40.50.880">
    <property type="match status" value="1"/>
</dbReference>
<dbReference type="HAMAP" id="MF_01615">
    <property type="entry name" value="PdxT"/>
    <property type="match status" value="1"/>
</dbReference>
<dbReference type="InterPro" id="IPR029062">
    <property type="entry name" value="Class_I_gatase-like"/>
</dbReference>
<dbReference type="InterPro" id="IPR002161">
    <property type="entry name" value="PdxT/SNO"/>
</dbReference>
<dbReference type="InterPro" id="IPR021196">
    <property type="entry name" value="PdxT/SNO_CS"/>
</dbReference>
<dbReference type="NCBIfam" id="TIGR03800">
    <property type="entry name" value="PLP_synth_Pdx2"/>
    <property type="match status" value="1"/>
</dbReference>
<dbReference type="PANTHER" id="PTHR31559">
    <property type="entry name" value="PYRIDOXAL 5'-PHOSPHATE SYNTHASE SUBUNIT SNO"/>
    <property type="match status" value="1"/>
</dbReference>
<dbReference type="PANTHER" id="PTHR31559:SF0">
    <property type="entry name" value="PYRIDOXAL 5'-PHOSPHATE SYNTHASE SUBUNIT SNO1-RELATED"/>
    <property type="match status" value="1"/>
</dbReference>
<dbReference type="Pfam" id="PF01174">
    <property type="entry name" value="SNO"/>
    <property type="match status" value="1"/>
</dbReference>
<dbReference type="PIRSF" id="PIRSF005639">
    <property type="entry name" value="Glut_amidoT_SNO"/>
    <property type="match status" value="1"/>
</dbReference>
<dbReference type="SUPFAM" id="SSF52317">
    <property type="entry name" value="Class I glutamine amidotransferase-like"/>
    <property type="match status" value="1"/>
</dbReference>
<dbReference type="PROSITE" id="PS01236">
    <property type="entry name" value="PDXT_SNO_1"/>
    <property type="match status" value="1"/>
</dbReference>
<dbReference type="PROSITE" id="PS51130">
    <property type="entry name" value="PDXT_SNO_2"/>
    <property type="match status" value="1"/>
</dbReference>
<reference key="1">
    <citation type="journal article" date="2000" name="Proc. Natl. Acad. Sci. U.S.A.">
        <title>Genome sequence of Halobacterium species NRC-1.</title>
        <authorList>
            <person name="Ng W.V."/>
            <person name="Kennedy S.P."/>
            <person name="Mahairas G.G."/>
            <person name="Berquist B."/>
            <person name="Pan M."/>
            <person name="Shukla H.D."/>
            <person name="Lasky S.R."/>
            <person name="Baliga N.S."/>
            <person name="Thorsson V."/>
            <person name="Sbrogna J."/>
            <person name="Swartzell S."/>
            <person name="Weir D."/>
            <person name="Hall J."/>
            <person name="Dahl T.A."/>
            <person name="Welti R."/>
            <person name="Goo Y.A."/>
            <person name="Leithauser B."/>
            <person name="Keller K."/>
            <person name="Cruz R."/>
            <person name="Danson M.J."/>
            <person name="Hough D.W."/>
            <person name="Maddocks D.G."/>
            <person name="Jablonski P.E."/>
            <person name="Krebs M.P."/>
            <person name="Angevine C.M."/>
            <person name="Dale H."/>
            <person name="Isenbarger T.A."/>
            <person name="Peck R.F."/>
            <person name="Pohlschroder M."/>
            <person name="Spudich J.L."/>
            <person name="Jung K.-H."/>
            <person name="Alam M."/>
            <person name="Freitas T."/>
            <person name="Hou S."/>
            <person name="Daniels C.J."/>
            <person name="Dennis P.P."/>
            <person name="Omer A.D."/>
            <person name="Ebhardt H."/>
            <person name="Lowe T.M."/>
            <person name="Liang P."/>
            <person name="Riley M."/>
            <person name="Hood L."/>
            <person name="DasSarma S."/>
        </authorList>
    </citation>
    <scope>NUCLEOTIDE SEQUENCE [LARGE SCALE GENOMIC DNA]</scope>
    <source>
        <strain>ATCC 700922 / JCM 11081 / NRC-1</strain>
    </source>
</reference>
<keyword id="KW-0315">Glutamine amidotransferase</keyword>
<keyword id="KW-0378">Hydrolase</keyword>
<keyword id="KW-0456">Lyase</keyword>
<keyword id="KW-0663">Pyridoxal phosphate</keyword>
<keyword id="KW-1185">Reference proteome</keyword>